<name>NTF3_BOACO</name>
<comment type="function">
    <text evidence="1">Seems to promote the survival of visceral and proprioceptive sensory neurons.</text>
</comment>
<comment type="subcellular location">
    <subcellularLocation>
        <location evidence="1">Secreted</location>
    </subcellularLocation>
</comment>
<comment type="similarity">
    <text evidence="4">Belongs to the NGF-beta family.</text>
</comment>
<evidence type="ECO:0000250" key="1"/>
<evidence type="ECO:0000255" key="2"/>
<evidence type="ECO:0000256" key="3">
    <source>
        <dbReference type="SAM" id="MobiDB-lite"/>
    </source>
</evidence>
<evidence type="ECO:0000305" key="4"/>
<gene>
    <name type="primary">NTF3</name>
</gene>
<sequence length="163" mass="18355">IQSSSMDQGILTEDSMNSFIRTLIQAGIWKNKVPKQTARTKDGMQTTVKKTEAEADARASQDTRLGFQPIVSVDVELLRQQRRFSSPRVLLSENTPLEPPPLYLTEEPVVLNRTSRRKREGKSHRGEYSVCDSESRWVTDKSSAVDIRGHQVTVLGEIRMGPS</sequence>
<keyword id="KW-0165">Cleavage on pair of basic residues</keyword>
<keyword id="KW-0325">Glycoprotein</keyword>
<keyword id="KW-0339">Growth factor</keyword>
<keyword id="KW-0964">Secreted</keyword>
<keyword id="KW-0732">Signal</keyword>
<reference key="1">
    <citation type="journal article" date="2006" name="Mol. Phylogenet. Evol.">
        <title>Dispersal and vicariance: the complex evolutionary history of boid snakes.</title>
        <authorList>
            <person name="Noonan B.P."/>
            <person name="Chippindale P.T."/>
        </authorList>
    </citation>
    <scope>NUCLEOTIDE SEQUENCE [GENOMIC DNA]</scope>
</reference>
<protein>
    <recommendedName>
        <fullName>Neurotrophin-3</fullName>
        <shortName>NT-3</shortName>
    </recommendedName>
</protein>
<accession>Q1X6Z1</accession>
<proteinExistence type="inferred from homology"/>
<feature type="signal peptide" evidence="2">
    <location>
        <begin position="1" status="less than"/>
        <end position="3"/>
    </location>
</feature>
<feature type="propeptide" id="PRO_0000346711" evidence="1">
    <location>
        <begin position="4"/>
        <end position="119"/>
    </location>
</feature>
<feature type="chain" id="PRO_0000346712" description="Neurotrophin-3">
    <location>
        <begin position="120"/>
        <end position="163" status="greater than"/>
    </location>
</feature>
<feature type="region of interest" description="Disordered" evidence="3">
    <location>
        <begin position="36"/>
        <end position="61"/>
    </location>
</feature>
<feature type="compositionally biased region" description="Basic and acidic residues" evidence="3">
    <location>
        <begin position="49"/>
        <end position="61"/>
    </location>
</feature>
<feature type="glycosylation site" description="N-linked (GlcNAc...) asparagine" evidence="2">
    <location>
        <position position="112"/>
    </location>
</feature>
<feature type="non-terminal residue">
    <location>
        <position position="1"/>
    </location>
</feature>
<feature type="non-terminal residue">
    <location>
        <position position="163"/>
    </location>
</feature>
<dbReference type="EMBL" id="AY988047">
    <property type="protein sequence ID" value="AAY44254.1"/>
    <property type="molecule type" value="Genomic_DNA"/>
</dbReference>
<dbReference type="SMR" id="Q1X6Z1"/>
<dbReference type="GlyCosmos" id="Q1X6Z1">
    <property type="glycosylation" value="1 site, No reported glycans"/>
</dbReference>
<dbReference type="GO" id="GO:0030424">
    <property type="term" value="C:axon"/>
    <property type="evidence" value="ECO:0007669"/>
    <property type="project" value="TreeGrafter"/>
</dbReference>
<dbReference type="GO" id="GO:0030425">
    <property type="term" value="C:dendrite"/>
    <property type="evidence" value="ECO:0007669"/>
    <property type="project" value="TreeGrafter"/>
</dbReference>
<dbReference type="GO" id="GO:0005615">
    <property type="term" value="C:extracellular space"/>
    <property type="evidence" value="ECO:0007669"/>
    <property type="project" value="TreeGrafter"/>
</dbReference>
<dbReference type="GO" id="GO:0008021">
    <property type="term" value="C:synaptic vesicle"/>
    <property type="evidence" value="ECO:0007669"/>
    <property type="project" value="TreeGrafter"/>
</dbReference>
<dbReference type="GO" id="GO:0008083">
    <property type="term" value="F:growth factor activity"/>
    <property type="evidence" value="ECO:0007669"/>
    <property type="project" value="UniProtKB-KW"/>
</dbReference>
<dbReference type="GO" id="GO:0005163">
    <property type="term" value="F:nerve growth factor receptor binding"/>
    <property type="evidence" value="ECO:0007669"/>
    <property type="project" value="TreeGrafter"/>
</dbReference>
<dbReference type="GO" id="GO:0007169">
    <property type="term" value="P:cell surface receptor protein tyrosine kinase signaling pathway"/>
    <property type="evidence" value="ECO:0007669"/>
    <property type="project" value="TreeGrafter"/>
</dbReference>
<dbReference type="GO" id="GO:0050804">
    <property type="term" value="P:modulation of chemical synaptic transmission"/>
    <property type="evidence" value="ECO:0007669"/>
    <property type="project" value="TreeGrafter"/>
</dbReference>
<dbReference type="GO" id="GO:0043524">
    <property type="term" value="P:negative regulation of neuron apoptotic process"/>
    <property type="evidence" value="ECO:0007669"/>
    <property type="project" value="TreeGrafter"/>
</dbReference>
<dbReference type="GO" id="GO:0021675">
    <property type="term" value="P:nerve development"/>
    <property type="evidence" value="ECO:0007669"/>
    <property type="project" value="TreeGrafter"/>
</dbReference>
<dbReference type="GO" id="GO:0038180">
    <property type="term" value="P:nerve growth factor signaling pathway"/>
    <property type="evidence" value="ECO:0007669"/>
    <property type="project" value="TreeGrafter"/>
</dbReference>
<dbReference type="GO" id="GO:0048812">
    <property type="term" value="P:neuron projection morphogenesis"/>
    <property type="evidence" value="ECO:0007669"/>
    <property type="project" value="TreeGrafter"/>
</dbReference>
<dbReference type="Gene3D" id="2.10.90.10">
    <property type="entry name" value="Cystine-knot cytokines"/>
    <property type="match status" value="1"/>
</dbReference>
<dbReference type="InterPro" id="IPR029034">
    <property type="entry name" value="Cystine-knot_cytokine"/>
</dbReference>
<dbReference type="InterPro" id="IPR020408">
    <property type="entry name" value="Nerve_growth_factor-like"/>
</dbReference>
<dbReference type="InterPro" id="IPR002072">
    <property type="entry name" value="Nerve_growth_factor-rel"/>
</dbReference>
<dbReference type="InterPro" id="IPR015578">
    <property type="entry name" value="Neurotrophin-3"/>
</dbReference>
<dbReference type="InterPro" id="IPR045815">
    <property type="entry name" value="NTF3_N"/>
</dbReference>
<dbReference type="PANTHER" id="PTHR11589">
    <property type="entry name" value="NERVE GROWTH FACTOR NGF -RELATED"/>
    <property type="match status" value="1"/>
</dbReference>
<dbReference type="PANTHER" id="PTHR11589:SF4">
    <property type="entry name" value="NEUROTROPHIN-3"/>
    <property type="match status" value="1"/>
</dbReference>
<dbReference type="Pfam" id="PF00243">
    <property type="entry name" value="NGF"/>
    <property type="match status" value="1"/>
</dbReference>
<dbReference type="Pfam" id="PF19338">
    <property type="entry name" value="NTF3_N"/>
    <property type="match status" value="1"/>
</dbReference>
<dbReference type="PIRSF" id="PIRSF001789">
    <property type="entry name" value="NGF"/>
    <property type="match status" value="1"/>
</dbReference>
<dbReference type="PRINTS" id="PR01914">
    <property type="entry name" value="NEUROTROPHN3"/>
</dbReference>
<dbReference type="SMART" id="SM00140">
    <property type="entry name" value="NGF"/>
    <property type="match status" value="1"/>
</dbReference>
<dbReference type="SUPFAM" id="SSF57501">
    <property type="entry name" value="Cystine-knot cytokines"/>
    <property type="match status" value="1"/>
</dbReference>
<dbReference type="PROSITE" id="PS50270">
    <property type="entry name" value="NGF_2"/>
    <property type="match status" value="1"/>
</dbReference>
<organism>
    <name type="scientific">Boa constrictor</name>
    <name type="common">Boa</name>
    <dbReference type="NCBI Taxonomy" id="8574"/>
    <lineage>
        <taxon>Eukaryota</taxon>
        <taxon>Metazoa</taxon>
        <taxon>Chordata</taxon>
        <taxon>Craniata</taxon>
        <taxon>Vertebrata</taxon>
        <taxon>Euteleostomi</taxon>
        <taxon>Lepidosauria</taxon>
        <taxon>Squamata</taxon>
        <taxon>Bifurcata</taxon>
        <taxon>Unidentata</taxon>
        <taxon>Episquamata</taxon>
        <taxon>Toxicofera</taxon>
        <taxon>Serpentes</taxon>
        <taxon>Henophidia</taxon>
        <taxon>Boidae</taxon>
        <taxon>Boinae</taxon>
        <taxon>Boa</taxon>
    </lineage>
</organism>